<protein>
    <recommendedName>
        <fullName evidence="1">DNA ligase</fullName>
        <ecNumber evidence="1">6.5.1.2</ecNumber>
    </recommendedName>
    <alternativeName>
        <fullName evidence="1">Polydeoxyribonucleotide synthase [NAD(+)]</fullName>
    </alternativeName>
</protein>
<dbReference type="EC" id="6.5.1.2" evidence="1"/>
<dbReference type="EMBL" id="CP001186">
    <property type="protein sequence ID" value="ACK97485.1"/>
    <property type="molecule type" value="Genomic_DNA"/>
</dbReference>
<dbReference type="RefSeq" id="WP_000031434.1">
    <property type="nucleotide sequence ID" value="NC_011772.1"/>
</dbReference>
<dbReference type="SMR" id="B7IUW5"/>
<dbReference type="KEGG" id="bcg:BCG9842_B4968"/>
<dbReference type="HOGENOM" id="CLU_007764_2_1_9"/>
<dbReference type="Proteomes" id="UP000006744">
    <property type="component" value="Chromosome"/>
</dbReference>
<dbReference type="GO" id="GO:0005829">
    <property type="term" value="C:cytosol"/>
    <property type="evidence" value="ECO:0007669"/>
    <property type="project" value="TreeGrafter"/>
</dbReference>
<dbReference type="GO" id="GO:0003677">
    <property type="term" value="F:DNA binding"/>
    <property type="evidence" value="ECO:0007669"/>
    <property type="project" value="InterPro"/>
</dbReference>
<dbReference type="GO" id="GO:0003911">
    <property type="term" value="F:DNA ligase (NAD+) activity"/>
    <property type="evidence" value="ECO:0007669"/>
    <property type="project" value="UniProtKB-UniRule"/>
</dbReference>
<dbReference type="GO" id="GO:0046872">
    <property type="term" value="F:metal ion binding"/>
    <property type="evidence" value="ECO:0007669"/>
    <property type="project" value="UniProtKB-KW"/>
</dbReference>
<dbReference type="GO" id="GO:0006281">
    <property type="term" value="P:DNA repair"/>
    <property type="evidence" value="ECO:0007669"/>
    <property type="project" value="UniProtKB-KW"/>
</dbReference>
<dbReference type="GO" id="GO:0006260">
    <property type="term" value="P:DNA replication"/>
    <property type="evidence" value="ECO:0007669"/>
    <property type="project" value="UniProtKB-KW"/>
</dbReference>
<dbReference type="CDD" id="cd17748">
    <property type="entry name" value="BRCT_DNA_ligase_like"/>
    <property type="match status" value="1"/>
</dbReference>
<dbReference type="CDD" id="cd00114">
    <property type="entry name" value="LIGANc"/>
    <property type="match status" value="1"/>
</dbReference>
<dbReference type="FunFam" id="1.10.150.20:FF:000006">
    <property type="entry name" value="DNA ligase"/>
    <property type="match status" value="1"/>
</dbReference>
<dbReference type="FunFam" id="1.10.150.20:FF:000007">
    <property type="entry name" value="DNA ligase"/>
    <property type="match status" value="1"/>
</dbReference>
<dbReference type="FunFam" id="1.10.287.610:FF:000002">
    <property type="entry name" value="DNA ligase"/>
    <property type="match status" value="1"/>
</dbReference>
<dbReference type="FunFam" id="2.40.50.140:FF:000012">
    <property type="entry name" value="DNA ligase"/>
    <property type="match status" value="1"/>
</dbReference>
<dbReference type="FunFam" id="3.30.470.30:FF:000001">
    <property type="entry name" value="DNA ligase"/>
    <property type="match status" value="1"/>
</dbReference>
<dbReference type="FunFam" id="3.40.50.10190:FF:000026">
    <property type="entry name" value="DNA ligase"/>
    <property type="match status" value="1"/>
</dbReference>
<dbReference type="FunFam" id="6.20.10.30:FF:000002">
    <property type="entry name" value="DNA ligase"/>
    <property type="match status" value="1"/>
</dbReference>
<dbReference type="Gene3D" id="6.20.10.30">
    <property type="match status" value="1"/>
</dbReference>
<dbReference type="Gene3D" id="1.10.150.20">
    <property type="entry name" value="5' to 3' exonuclease, C-terminal subdomain"/>
    <property type="match status" value="2"/>
</dbReference>
<dbReference type="Gene3D" id="3.40.50.10190">
    <property type="entry name" value="BRCT domain"/>
    <property type="match status" value="1"/>
</dbReference>
<dbReference type="Gene3D" id="3.30.470.30">
    <property type="entry name" value="DNA ligase/mRNA capping enzyme"/>
    <property type="match status" value="1"/>
</dbReference>
<dbReference type="Gene3D" id="1.10.287.610">
    <property type="entry name" value="Helix hairpin bin"/>
    <property type="match status" value="1"/>
</dbReference>
<dbReference type="Gene3D" id="2.40.50.140">
    <property type="entry name" value="Nucleic acid-binding proteins"/>
    <property type="match status" value="1"/>
</dbReference>
<dbReference type="HAMAP" id="MF_01588">
    <property type="entry name" value="DNA_ligase_A"/>
    <property type="match status" value="1"/>
</dbReference>
<dbReference type="InterPro" id="IPR001357">
    <property type="entry name" value="BRCT_dom"/>
</dbReference>
<dbReference type="InterPro" id="IPR036420">
    <property type="entry name" value="BRCT_dom_sf"/>
</dbReference>
<dbReference type="InterPro" id="IPR041663">
    <property type="entry name" value="DisA/LigA_HHH"/>
</dbReference>
<dbReference type="InterPro" id="IPR001679">
    <property type="entry name" value="DNA_ligase"/>
</dbReference>
<dbReference type="InterPro" id="IPR018239">
    <property type="entry name" value="DNA_ligase_AS"/>
</dbReference>
<dbReference type="InterPro" id="IPR033136">
    <property type="entry name" value="DNA_ligase_CS"/>
</dbReference>
<dbReference type="InterPro" id="IPR013839">
    <property type="entry name" value="DNAligase_adenylation"/>
</dbReference>
<dbReference type="InterPro" id="IPR013840">
    <property type="entry name" value="DNAligase_N"/>
</dbReference>
<dbReference type="InterPro" id="IPR003583">
    <property type="entry name" value="Hlx-hairpin-Hlx_DNA-bd_motif"/>
</dbReference>
<dbReference type="InterPro" id="IPR012340">
    <property type="entry name" value="NA-bd_OB-fold"/>
</dbReference>
<dbReference type="InterPro" id="IPR004150">
    <property type="entry name" value="NAD_DNA_ligase_OB"/>
</dbReference>
<dbReference type="InterPro" id="IPR010994">
    <property type="entry name" value="RuvA_2-like"/>
</dbReference>
<dbReference type="InterPro" id="IPR004149">
    <property type="entry name" value="Znf_DNAligase_C4"/>
</dbReference>
<dbReference type="NCBIfam" id="TIGR00575">
    <property type="entry name" value="dnlj"/>
    <property type="match status" value="1"/>
</dbReference>
<dbReference type="NCBIfam" id="NF005932">
    <property type="entry name" value="PRK07956.1"/>
    <property type="match status" value="1"/>
</dbReference>
<dbReference type="PANTHER" id="PTHR23389">
    <property type="entry name" value="CHROMOSOME TRANSMISSION FIDELITY FACTOR 18"/>
    <property type="match status" value="1"/>
</dbReference>
<dbReference type="PANTHER" id="PTHR23389:SF9">
    <property type="entry name" value="DNA LIGASE"/>
    <property type="match status" value="1"/>
</dbReference>
<dbReference type="Pfam" id="PF00533">
    <property type="entry name" value="BRCT"/>
    <property type="match status" value="1"/>
</dbReference>
<dbReference type="Pfam" id="PF01653">
    <property type="entry name" value="DNA_ligase_aden"/>
    <property type="match status" value="1"/>
</dbReference>
<dbReference type="Pfam" id="PF03120">
    <property type="entry name" value="DNA_ligase_OB"/>
    <property type="match status" value="1"/>
</dbReference>
<dbReference type="Pfam" id="PF03119">
    <property type="entry name" value="DNA_ligase_ZBD"/>
    <property type="match status" value="1"/>
</dbReference>
<dbReference type="Pfam" id="PF12826">
    <property type="entry name" value="HHH_2"/>
    <property type="match status" value="1"/>
</dbReference>
<dbReference type="Pfam" id="PF14520">
    <property type="entry name" value="HHH_5"/>
    <property type="match status" value="1"/>
</dbReference>
<dbReference type="Pfam" id="PF22745">
    <property type="entry name" value="Nlig-Ia"/>
    <property type="match status" value="1"/>
</dbReference>
<dbReference type="PIRSF" id="PIRSF001604">
    <property type="entry name" value="LigA"/>
    <property type="match status" value="1"/>
</dbReference>
<dbReference type="SMART" id="SM00292">
    <property type="entry name" value="BRCT"/>
    <property type="match status" value="1"/>
</dbReference>
<dbReference type="SMART" id="SM00278">
    <property type="entry name" value="HhH1"/>
    <property type="match status" value="3"/>
</dbReference>
<dbReference type="SMART" id="SM00532">
    <property type="entry name" value="LIGANc"/>
    <property type="match status" value="1"/>
</dbReference>
<dbReference type="SUPFAM" id="SSF52113">
    <property type="entry name" value="BRCT domain"/>
    <property type="match status" value="1"/>
</dbReference>
<dbReference type="SUPFAM" id="SSF56091">
    <property type="entry name" value="DNA ligase/mRNA capping enzyme, catalytic domain"/>
    <property type="match status" value="1"/>
</dbReference>
<dbReference type="SUPFAM" id="SSF50249">
    <property type="entry name" value="Nucleic acid-binding proteins"/>
    <property type="match status" value="1"/>
</dbReference>
<dbReference type="SUPFAM" id="SSF47781">
    <property type="entry name" value="RuvA domain 2-like"/>
    <property type="match status" value="1"/>
</dbReference>
<dbReference type="PROSITE" id="PS50172">
    <property type="entry name" value="BRCT"/>
    <property type="match status" value="1"/>
</dbReference>
<dbReference type="PROSITE" id="PS01055">
    <property type="entry name" value="DNA_LIGASE_N1"/>
    <property type="match status" value="1"/>
</dbReference>
<dbReference type="PROSITE" id="PS01056">
    <property type="entry name" value="DNA_LIGASE_N2"/>
    <property type="match status" value="1"/>
</dbReference>
<feature type="chain" id="PRO_0000380300" description="DNA ligase">
    <location>
        <begin position="1"/>
        <end position="669"/>
    </location>
</feature>
<feature type="domain" description="BRCT" evidence="1">
    <location>
        <begin position="591"/>
        <end position="669"/>
    </location>
</feature>
<feature type="active site" description="N6-AMP-lysine intermediate" evidence="1">
    <location>
        <position position="116"/>
    </location>
</feature>
<feature type="binding site" evidence="1">
    <location>
        <begin position="34"/>
        <end position="38"/>
    </location>
    <ligand>
        <name>NAD(+)</name>
        <dbReference type="ChEBI" id="CHEBI:57540"/>
    </ligand>
</feature>
<feature type="binding site" evidence="1">
    <location>
        <begin position="83"/>
        <end position="84"/>
    </location>
    <ligand>
        <name>NAD(+)</name>
        <dbReference type="ChEBI" id="CHEBI:57540"/>
    </ligand>
</feature>
<feature type="binding site" evidence="1">
    <location>
        <position position="114"/>
    </location>
    <ligand>
        <name>NAD(+)</name>
        <dbReference type="ChEBI" id="CHEBI:57540"/>
    </ligand>
</feature>
<feature type="binding site" evidence="1">
    <location>
        <position position="137"/>
    </location>
    <ligand>
        <name>NAD(+)</name>
        <dbReference type="ChEBI" id="CHEBI:57540"/>
    </ligand>
</feature>
<feature type="binding site" evidence="1">
    <location>
        <position position="171"/>
    </location>
    <ligand>
        <name>NAD(+)</name>
        <dbReference type="ChEBI" id="CHEBI:57540"/>
    </ligand>
</feature>
<feature type="binding site" evidence="1">
    <location>
        <position position="287"/>
    </location>
    <ligand>
        <name>NAD(+)</name>
        <dbReference type="ChEBI" id="CHEBI:57540"/>
    </ligand>
</feature>
<feature type="binding site" evidence="1">
    <location>
        <position position="311"/>
    </location>
    <ligand>
        <name>NAD(+)</name>
        <dbReference type="ChEBI" id="CHEBI:57540"/>
    </ligand>
</feature>
<feature type="binding site" evidence="1">
    <location>
        <position position="405"/>
    </location>
    <ligand>
        <name>Zn(2+)</name>
        <dbReference type="ChEBI" id="CHEBI:29105"/>
    </ligand>
</feature>
<feature type="binding site" evidence="1">
    <location>
        <position position="408"/>
    </location>
    <ligand>
        <name>Zn(2+)</name>
        <dbReference type="ChEBI" id="CHEBI:29105"/>
    </ligand>
</feature>
<feature type="binding site" evidence="1">
    <location>
        <position position="423"/>
    </location>
    <ligand>
        <name>Zn(2+)</name>
        <dbReference type="ChEBI" id="CHEBI:29105"/>
    </ligand>
</feature>
<feature type="binding site" evidence="1">
    <location>
        <position position="428"/>
    </location>
    <ligand>
        <name>Zn(2+)</name>
        <dbReference type="ChEBI" id="CHEBI:29105"/>
    </ligand>
</feature>
<reference key="1">
    <citation type="submission" date="2008-10" db="EMBL/GenBank/DDBJ databases">
        <title>Genome sequence of Bacillus cereus G9842.</title>
        <authorList>
            <person name="Dodson R.J."/>
            <person name="Durkin A.S."/>
            <person name="Rosovitz M.J."/>
            <person name="Rasko D.A."/>
            <person name="Hoffmaster A."/>
            <person name="Ravel J."/>
            <person name="Sutton G."/>
        </authorList>
    </citation>
    <scope>NUCLEOTIDE SEQUENCE [LARGE SCALE GENOMIC DNA]</scope>
    <source>
        <strain>G9842</strain>
    </source>
</reference>
<organism>
    <name type="scientific">Bacillus cereus (strain G9842)</name>
    <dbReference type="NCBI Taxonomy" id="405531"/>
    <lineage>
        <taxon>Bacteria</taxon>
        <taxon>Bacillati</taxon>
        <taxon>Bacillota</taxon>
        <taxon>Bacilli</taxon>
        <taxon>Bacillales</taxon>
        <taxon>Bacillaceae</taxon>
        <taxon>Bacillus</taxon>
        <taxon>Bacillus cereus group</taxon>
    </lineage>
</organism>
<comment type="function">
    <text evidence="1">DNA ligase that catalyzes the formation of phosphodiester linkages between 5'-phosphoryl and 3'-hydroxyl groups in double-stranded DNA using NAD as a coenzyme and as the energy source for the reaction. It is essential for DNA replication and repair of damaged DNA.</text>
</comment>
<comment type="catalytic activity">
    <reaction evidence="1">
        <text>NAD(+) + (deoxyribonucleotide)n-3'-hydroxyl + 5'-phospho-(deoxyribonucleotide)m = (deoxyribonucleotide)n+m + AMP + beta-nicotinamide D-nucleotide.</text>
        <dbReference type="EC" id="6.5.1.2"/>
    </reaction>
</comment>
<comment type="cofactor">
    <cofactor evidence="1">
        <name>Mg(2+)</name>
        <dbReference type="ChEBI" id="CHEBI:18420"/>
    </cofactor>
    <cofactor evidence="1">
        <name>Mn(2+)</name>
        <dbReference type="ChEBI" id="CHEBI:29035"/>
    </cofactor>
</comment>
<comment type="similarity">
    <text evidence="1">Belongs to the NAD-dependent DNA ligase family. LigA subfamily.</text>
</comment>
<sequence>MSKEIAKKRIEELRDLLNTFNYQYHVLDNPSVSDAEYDRNMQELIKLEAENPEFMSEDSPSVRVGGTILDIFEKVTHKSPMLSLGNAFNEGDLRDFDRRVRQGIDDANVRYICELKIDGLAVSLHYEKGRFIQGATRGDGVTGEDITQNLKTIKAIPLRLNEEVTLEARGEAYMPKRSFVKLNEEKEQNGEDVFANPRNAAAGSIRQLDPKIAAKRNLSMFVYGLANVEEKTIPSHSESLDFLGELGFKTNPNRRTCETIEEVIAYVEEWQEKRPHLDYEIDGIVIKVDDVALQESLGTTAKSPRWAIAYKFPAEEVVTRLTGIELSVGRTGVVTPTAELEPVRVAGTIVRRASLHNEDLIREKDIRIGDYVVVKKAGDIIPEVVNVIFDKRTGEEEEYRMPTHCPACESELVRLEEEVALRCINPTCPAQIREGLIHFVSRNAMNIDGLGERVITQLFDADYIRTFADLYALTKEQLLQLERFGEKSATNLIQAIENSKENSLERLLFGLGIRHVGAKAARTFAEHFETMDELVKATEEELKAINEIGEKMAQSVVTYFDNEDVLELLQQFKEYGVNMTYKGIKIADLQNVESYFAGKTVVLTGKLEVMGRSEAKKKIEALGGKVTGSVSKSTDLVVAGESAGSKLAQAEKHNVEVWNEERFLQELNK</sequence>
<accession>B7IUW5</accession>
<gene>
    <name evidence="1" type="primary">ligA</name>
    <name type="ordered locus">BCG9842_B4968</name>
</gene>
<name>DNLJ_BACC2</name>
<evidence type="ECO:0000255" key="1">
    <source>
        <dbReference type="HAMAP-Rule" id="MF_01588"/>
    </source>
</evidence>
<keyword id="KW-0227">DNA damage</keyword>
<keyword id="KW-0234">DNA repair</keyword>
<keyword id="KW-0235">DNA replication</keyword>
<keyword id="KW-0436">Ligase</keyword>
<keyword id="KW-0460">Magnesium</keyword>
<keyword id="KW-0464">Manganese</keyword>
<keyword id="KW-0479">Metal-binding</keyword>
<keyword id="KW-0520">NAD</keyword>
<keyword id="KW-0862">Zinc</keyword>
<proteinExistence type="inferred from homology"/>